<accession>Q3U3F9</accession>
<accession>Q9D9Y9</accession>
<sequence length="336" mass="38922">MTALSSKNCSLQYQLHQSPQLLEASCLLFLIILGKVLLNILLLRVRRGDARWTLMEYFCFSLALVDLLLLVNISILTYFRDFVVLGIRFTRYHICLLTQIISFTYGFLHYPVCSLACIDYWCNLSRASKQSSRWQKLLYFLTVILTWISVLAYVLVDPAISVSLKAHRGYVYQCPAYVSTQSHWLSLSMLMVLFVAFLISWQEVVALLQAMRIASYKSKAALYFPFPLHCGYALSCREALLPRLIVCFLGTWFPFVALQVLILSLRVQIPAYIEMNVPWLYFVNSFLIAAVYWFNCHKLDLRDSSLPVDPFINWKCCFVPVHRLKQVERPMSIVIC</sequence>
<organism>
    <name type="scientific">Mus musculus</name>
    <name type="common">Mouse</name>
    <dbReference type="NCBI Taxonomy" id="10090"/>
    <lineage>
        <taxon>Eukaryota</taxon>
        <taxon>Metazoa</taxon>
        <taxon>Chordata</taxon>
        <taxon>Craniata</taxon>
        <taxon>Vertebrata</taxon>
        <taxon>Euteleostomi</taxon>
        <taxon>Mammalia</taxon>
        <taxon>Eutheria</taxon>
        <taxon>Euarchontoglires</taxon>
        <taxon>Glires</taxon>
        <taxon>Rodentia</taxon>
        <taxon>Myomorpha</taxon>
        <taxon>Muroidea</taxon>
        <taxon>Muridae</taxon>
        <taxon>Murinae</taxon>
        <taxon>Mus</taxon>
        <taxon>Mus</taxon>
    </lineage>
</organism>
<comment type="function">
    <text>Orphan receptor.</text>
</comment>
<comment type="subcellular location">
    <subcellularLocation>
        <location>Cell membrane</location>
        <topology>Multi-pass membrane protein</topology>
    </subcellularLocation>
</comment>
<comment type="similarity">
    <text evidence="2">Belongs to the G-protein coupled receptor 1 family.</text>
</comment>
<comment type="sequence caution" evidence="3">
    <conflict type="frameshift">
        <sequence resource="EMBL-CDS" id="BAB24531"/>
    </conflict>
</comment>
<name>GP160_MOUSE</name>
<protein>
    <recommendedName>
        <fullName>Probable G-protein coupled receptor 160</fullName>
    </recommendedName>
</protein>
<reference key="1">
    <citation type="journal article" date="2005" name="Science">
        <title>The transcriptional landscape of the mammalian genome.</title>
        <authorList>
            <person name="Carninci P."/>
            <person name="Kasukawa T."/>
            <person name="Katayama S."/>
            <person name="Gough J."/>
            <person name="Frith M.C."/>
            <person name="Maeda N."/>
            <person name="Oyama R."/>
            <person name="Ravasi T."/>
            <person name="Lenhard B."/>
            <person name="Wells C."/>
            <person name="Kodzius R."/>
            <person name="Shimokawa K."/>
            <person name="Bajic V.B."/>
            <person name="Brenner S.E."/>
            <person name="Batalov S."/>
            <person name="Forrest A.R."/>
            <person name="Zavolan M."/>
            <person name="Davis M.J."/>
            <person name="Wilming L.G."/>
            <person name="Aidinis V."/>
            <person name="Allen J.E."/>
            <person name="Ambesi-Impiombato A."/>
            <person name="Apweiler R."/>
            <person name="Aturaliya R.N."/>
            <person name="Bailey T.L."/>
            <person name="Bansal M."/>
            <person name="Baxter L."/>
            <person name="Beisel K.W."/>
            <person name="Bersano T."/>
            <person name="Bono H."/>
            <person name="Chalk A.M."/>
            <person name="Chiu K.P."/>
            <person name="Choudhary V."/>
            <person name="Christoffels A."/>
            <person name="Clutterbuck D.R."/>
            <person name="Crowe M.L."/>
            <person name="Dalla E."/>
            <person name="Dalrymple B.P."/>
            <person name="de Bono B."/>
            <person name="Della Gatta G."/>
            <person name="di Bernardo D."/>
            <person name="Down T."/>
            <person name="Engstrom P."/>
            <person name="Fagiolini M."/>
            <person name="Faulkner G."/>
            <person name="Fletcher C.F."/>
            <person name="Fukushima T."/>
            <person name="Furuno M."/>
            <person name="Futaki S."/>
            <person name="Gariboldi M."/>
            <person name="Georgii-Hemming P."/>
            <person name="Gingeras T.R."/>
            <person name="Gojobori T."/>
            <person name="Green R.E."/>
            <person name="Gustincich S."/>
            <person name="Harbers M."/>
            <person name="Hayashi Y."/>
            <person name="Hensch T.K."/>
            <person name="Hirokawa N."/>
            <person name="Hill D."/>
            <person name="Huminiecki L."/>
            <person name="Iacono M."/>
            <person name="Ikeo K."/>
            <person name="Iwama A."/>
            <person name="Ishikawa T."/>
            <person name="Jakt M."/>
            <person name="Kanapin A."/>
            <person name="Katoh M."/>
            <person name="Kawasawa Y."/>
            <person name="Kelso J."/>
            <person name="Kitamura H."/>
            <person name="Kitano H."/>
            <person name="Kollias G."/>
            <person name="Krishnan S.P."/>
            <person name="Kruger A."/>
            <person name="Kummerfeld S.K."/>
            <person name="Kurochkin I.V."/>
            <person name="Lareau L.F."/>
            <person name="Lazarevic D."/>
            <person name="Lipovich L."/>
            <person name="Liu J."/>
            <person name="Liuni S."/>
            <person name="McWilliam S."/>
            <person name="Madan Babu M."/>
            <person name="Madera M."/>
            <person name="Marchionni L."/>
            <person name="Matsuda H."/>
            <person name="Matsuzawa S."/>
            <person name="Miki H."/>
            <person name="Mignone F."/>
            <person name="Miyake S."/>
            <person name="Morris K."/>
            <person name="Mottagui-Tabar S."/>
            <person name="Mulder N."/>
            <person name="Nakano N."/>
            <person name="Nakauchi H."/>
            <person name="Ng P."/>
            <person name="Nilsson R."/>
            <person name="Nishiguchi S."/>
            <person name="Nishikawa S."/>
            <person name="Nori F."/>
            <person name="Ohara O."/>
            <person name="Okazaki Y."/>
            <person name="Orlando V."/>
            <person name="Pang K.C."/>
            <person name="Pavan W.J."/>
            <person name="Pavesi G."/>
            <person name="Pesole G."/>
            <person name="Petrovsky N."/>
            <person name="Piazza S."/>
            <person name="Reed J."/>
            <person name="Reid J.F."/>
            <person name="Ring B.Z."/>
            <person name="Ringwald M."/>
            <person name="Rost B."/>
            <person name="Ruan Y."/>
            <person name="Salzberg S.L."/>
            <person name="Sandelin A."/>
            <person name="Schneider C."/>
            <person name="Schoenbach C."/>
            <person name="Sekiguchi K."/>
            <person name="Semple C.A."/>
            <person name="Seno S."/>
            <person name="Sessa L."/>
            <person name="Sheng Y."/>
            <person name="Shibata Y."/>
            <person name="Shimada H."/>
            <person name="Shimada K."/>
            <person name="Silva D."/>
            <person name="Sinclair B."/>
            <person name="Sperling S."/>
            <person name="Stupka E."/>
            <person name="Sugiura K."/>
            <person name="Sultana R."/>
            <person name="Takenaka Y."/>
            <person name="Taki K."/>
            <person name="Tammoja K."/>
            <person name="Tan S.L."/>
            <person name="Tang S."/>
            <person name="Taylor M.S."/>
            <person name="Tegner J."/>
            <person name="Teichmann S.A."/>
            <person name="Ueda H.R."/>
            <person name="van Nimwegen E."/>
            <person name="Verardo R."/>
            <person name="Wei C.L."/>
            <person name="Yagi K."/>
            <person name="Yamanishi H."/>
            <person name="Zabarovsky E."/>
            <person name="Zhu S."/>
            <person name="Zimmer A."/>
            <person name="Hide W."/>
            <person name="Bult C."/>
            <person name="Grimmond S.M."/>
            <person name="Teasdale R.D."/>
            <person name="Liu E.T."/>
            <person name="Brusic V."/>
            <person name="Quackenbush J."/>
            <person name="Wahlestedt C."/>
            <person name="Mattick J.S."/>
            <person name="Hume D.A."/>
            <person name="Kai C."/>
            <person name="Sasaki D."/>
            <person name="Tomaru Y."/>
            <person name="Fukuda S."/>
            <person name="Kanamori-Katayama M."/>
            <person name="Suzuki M."/>
            <person name="Aoki J."/>
            <person name="Arakawa T."/>
            <person name="Iida J."/>
            <person name="Imamura K."/>
            <person name="Itoh M."/>
            <person name="Kato T."/>
            <person name="Kawaji H."/>
            <person name="Kawagashira N."/>
            <person name="Kawashima T."/>
            <person name="Kojima M."/>
            <person name="Kondo S."/>
            <person name="Konno H."/>
            <person name="Nakano K."/>
            <person name="Ninomiya N."/>
            <person name="Nishio T."/>
            <person name="Okada M."/>
            <person name="Plessy C."/>
            <person name="Shibata K."/>
            <person name="Shiraki T."/>
            <person name="Suzuki S."/>
            <person name="Tagami M."/>
            <person name="Waki K."/>
            <person name="Watahiki A."/>
            <person name="Okamura-Oho Y."/>
            <person name="Suzuki H."/>
            <person name="Kawai J."/>
            <person name="Hayashizaki Y."/>
        </authorList>
    </citation>
    <scope>NUCLEOTIDE SEQUENCE [LARGE SCALE MRNA]</scope>
    <source>
        <strain>C57BL/6J</strain>
        <strain>NOD</strain>
        <tissue>Testis</tissue>
    </source>
</reference>
<evidence type="ECO:0000255" key="1"/>
<evidence type="ECO:0000255" key="2">
    <source>
        <dbReference type="PROSITE-ProRule" id="PRU00521"/>
    </source>
</evidence>
<evidence type="ECO:0000305" key="3"/>
<feature type="chain" id="PRO_0000069644" description="Probable G-protein coupled receptor 160">
    <location>
        <begin position="1"/>
        <end position="336"/>
    </location>
</feature>
<feature type="topological domain" description="Extracellular" evidence="1">
    <location>
        <begin position="1"/>
        <end position="20"/>
    </location>
</feature>
<feature type="transmembrane region" description="Helical; Name=1" evidence="1">
    <location>
        <begin position="21"/>
        <end position="41"/>
    </location>
</feature>
<feature type="topological domain" description="Cytoplasmic" evidence="1">
    <location>
        <begin position="42"/>
        <end position="56"/>
    </location>
</feature>
<feature type="transmembrane region" description="Helical; Name=2" evidence="1">
    <location>
        <begin position="57"/>
        <end position="77"/>
    </location>
</feature>
<feature type="topological domain" description="Extracellular" evidence="1">
    <location>
        <begin position="78"/>
        <end position="95"/>
    </location>
</feature>
<feature type="transmembrane region" description="Helical; Name=3" evidence="1">
    <location>
        <begin position="96"/>
        <end position="116"/>
    </location>
</feature>
<feature type="topological domain" description="Cytoplasmic" evidence="1">
    <location>
        <begin position="117"/>
        <end position="136"/>
    </location>
</feature>
<feature type="transmembrane region" description="Helical; Name=4" evidence="1">
    <location>
        <begin position="137"/>
        <end position="157"/>
    </location>
</feature>
<feature type="topological domain" description="Extracellular" evidence="1">
    <location>
        <begin position="158"/>
        <end position="186"/>
    </location>
</feature>
<feature type="transmembrane region" description="Helical; Name=5" evidence="1">
    <location>
        <begin position="187"/>
        <end position="207"/>
    </location>
</feature>
<feature type="topological domain" description="Cytoplasmic" evidence="1">
    <location>
        <begin position="208"/>
        <end position="243"/>
    </location>
</feature>
<feature type="transmembrane region" description="Helical; Name=6" evidence="1">
    <location>
        <begin position="244"/>
        <end position="264"/>
    </location>
</feature>
<feature type="topological domain" description="Extracellular" evidence="1">
    <location>
        <begin position="265"/>
        <end position="272"/>
    </location>
</feature>
<feature type="transmembrane region" description="Helical; Name=7" evidence="1">
    <location>
        <begin position="273"/>
        <end position="293"/>
    </location>
</feature>
<feature type="topological domain" description="Cytoplasmic" evidence="1">
    <location>
        <begin position="294"/>
        <end position="336"/>
    </location>
</feature>
<feature type="glycosylation site" description="N-linked (GlcNAc...) asparagine" evidence="1">
    <location>
        <position position="8"/>
    </location>
</feature>
<feature type="sequence conflict" description="In Ref. 1; BAB24531." evidence="3" ref="1">
    <original>L</original>
    <variation>F</variation>
    <location>
        <position position="21"/>
    </location>
</feature>
<feature type="sequence conflict" description="In Ref. 1; BAB24531." evidence="3" ref="1">
    <original>H</original>
    <variation>R</variation>
    <location>
        <position position="183"/>
    </location>
</feature>
<feature type="sequence conflict" description="In Ref. 1; BAB24531." evidence="3" ref="1">
    <original>E</original>
    <variation>K</variation>
    <location>
        <position position="203"/>
    </location>
</feature>
<feature type="sequence conflict" description="In Ref. 1; BAB24531." evidence="3" ref="1">
    <original>LL</original>
    <variation>VF</variation>
    <location>
        <begin position="207"/>
        <end position="208"/>
    </location>
</feature>
<feature type="sequence conflict" description="In Ref. 1; BAB24531." evidence="3" ref="1">
    <original>D</original>
    <variation>I</variation>
    <location>
        <position position="300"/>
    </location>
</feature>
<dbReference type="EMBL" id="AK006330">
    <property type="protein sequence ID" value="BAB24531.1"/>
    <property type="status" value="ALT_FRAME"/>
    <property type="molecule type" value="mRNA"/>
</dbReference>
<dbReference type="EMBL" id="AK154620">
    <property type="protein sequence ID" value="BAE32719.1"/>
    <property type="molecule type" value="mRNA"/>
</dbReference>
<dbReference type="EMBL" id="AK154784">
    <property type="protein sequence ID" value="BAE32827.1"/>
    <property type="molecule type" value="mRNA"/>
</dbReference>
<dbReference type="CCDS" id="CCDS50883.1"/>
<dbReference type="RefSeq" id="NP_001127857.1">
    <property type="nucleotide sequence ID" value="NM_001134385.2"/>
</dbReference>
<dbReference type="RefSeq" id="NP_001127858.1">
    <property type="nucleotide sequence ID" value="NM_001134386.2"/>
</dbReference>
<dbReference type="RefSeq" id="NP_001273923.1">
    <property type="nucleotide sequence ID" value="NM_001286994.1"/>
</dbReference>
<dbReference type="RefSeq" id="NP_001273924.1">
    <property type="nucleotide sequence ID" value="NM_001286995.1"/>
</dbReference>
<dbReference type="RefSeq" id="NP_001273925.1">
    <property type="nucleotide sequence ID" value="NM_001286996.1"/>
</dbReference>
<dbReference type="RefSeq" id="NP_001344073.1">
    <property type="nucleotide sequence ID" value="NM_001357144.1"/>
</dbReference>
<dbReference type="RefSeq" id="NP_082241.1">
    <property type="nucleotide sequence ID" value="NM_027965.2"/>
</dbReference>
<dbReference type="RefSeq" id="XP_006535602.1">
    <property type="nucleotide sequence ID" value="XM_006535539.4"/>
</dbReference>
<dbReference type="RefSeq" id="XP_017175222.1">
    <property type="nucleotide sequence ID" value="XM_017319733.1"/>
</dbReference>
<dbReference type="RefSeq" id="XP_017175223.1">
    <property type="nucleotide sequence ID" value="XM_017319734.3"/>
</dbReference>
<dbReference type="RefSeq" id="XP_017175224.1">
    <property type="nucleotide sequence ID" value="XM_017319735.3"/>
</dbReference>
<dbReference type="RefSeq" id="XP_017175225.1">
    <property type="nucleotide sequence ID" value="XM_017319736.1"/>
</dbReference>
<dbReference type="RefSeq" id="XP_017175226.1">
    <property type="nucleotide sequence ID" value="XM_017319737.3"/>
</dbReference>
<dbReference type="RefSeq" id="XP_030108690.1">
    <property type="nucleotide sequence ID" value="XM_030252830.2"/>
</dbReference>
<dbReference type="RefSeq" id="XP_030108691.1">
    <property type="nucleotide sequence ID" value="XM_030252831.2"/>
</dbReference>
<dbReference type="RefSeq" id="XP_030108692.1">
    <property type="nucleotide sequence ID" value="XM_030252832.2"/>
</dbReference>
<dbReference type="RefSeq" id="XP_036019232.1">
    <property type="nucleotide sequence ID" value="XM_036163339.1"/>
</dbReference>
<dbReference type="SMR" id="Q3U3F9"/>
<dbReference type="FunCoup" id="Q3U3F9">
    <property type="interactions" value="92"/>
</dbReference>
<dbReference type="STRING" id="10090.ENSMUSP00000103896"/>
<dbReference type="GlyCosmos" id="Q3U3F9">
    <property type="glycosylation" value="1 site, No reported glycans"/>
</dbReference>
<dbReference type="GlyGen" id="Q3U3F9">
    <property type="glycosylation" value="1 site"/>
</dbReference>
<dbReference type="PhosphoSitePlus" id="Q3U3F9"/>
<dbReference type="PaxDb" id="10090-ENSMUSP00000103893"/>
<dbReference type="ProteomicsDB" id="267656"/>
<dbReference type="Antibodypedia" id="1940">
    <property type="antibodies" value="224 antibodies from 29 providers"/>
</dbReference>
<dbReference type="DNASU" id="71862"/>
<dbReference type="Ensembl" id="ENSMUST00000046748.13">
    <property type="protein sequence ID" value="ENSMUSP00000045165.7"/>
    <property type="gene ID" value="ENSMUSG00000037661.15"/>
</dbReference>
<dbReference type="Ensembl" id="ENSMUST00000108258.8">
    <property type="protein sequence ID" value="ENSMUSP00000103893.2"/>
    <property type="gene ID" value="ENSMUSG00000037661.15"/>
</dbReference>
<dbReference type="Ensembl" id="ENSMUST00000108259.8">
    <property type="protein sequence ID" value="ENSMUSP00000103894.2"/>
    <property type="gene ID" value="ENSMUSG00000037661.15"/>
</dbReference>
<dbReference type="Ensembl" id="ENSMUST00000108261.8">
    <property type="protein sequence ID" value="ENSMUSP00000103896.2"/>
    <property type="gene ID" value="ENSMUSG00000037661.15"/>
</dbReference>
<dbReference type="Ensembl" id="ENSMUST00000166278.7">
    <property type="protein sequence ID" value="ENSMUSP00000128666.2"/>
    <property type="gene ID" value="ENSMUSG00000037661.15"/>
</dbReference>
<dbReference type="GeneID" id="71862"/>
<dbReference type="KEGG" id="mmu:71862"/>
<dbReference type="UCSC" id="uc008ovi.3">
    <property type="organism name" value="mouse"/>
</dbReference>
<dbReference type="AGR" id="MGI:1919112"/>
<dbReference type="CTD" id="26996"/>
<dbReference type="MGI" id="MGI:1919112">
    <property type="gene designation" value="Gpr160"/>
</dbReference>
<dbReference type="VEuPathDB" id="HostDB:ENSMUSG00000037661"/>
<dbReference type="eggNOG" id="ENOG502RTG9">
    <property type="taxonomic scope" value="Eukaryota"/>
</dbReference>
<dbReference type="GeneTree" id="ENSGT00390000015520"/>
<dbReference type="HOGENOM" id="CLU_826300_0_0_1"/>
<dbReference type="InParanoid" id="Q3U3F9"/>
<dbReference type="OMA" id="SYQCPFY"/>
<dbReference type="OrthoDB" id="9947933at2759"/>
<dbReference type="PhylomeDB" id="Q3U3F9"/>
<dbReference type="TreeFam" id="TF335541"/>
<dbReference type="BioGRID-ORCS" id="71862">
    <property type="hits" value="3 hits in 78 CRISPR screens"/>
</dbReference>
<dbReference type="ChiTaRS" id="Gpr160">
    <property type="organism name" value="mouse"/>
</dbReference>
<dbReference type="PRO" id="PR:Q3U3F9"/>
<dbReference type="Proteomes" id="UP000000589">
    <property type="component" value="Chromosome 3"/>
</dbReference>
<dbReference type="RNAct" id="Q3U3F9">
    <property type="molecule type" value="protein"/>
</dbReference>
<dbReference type="Bgee" id="ENSMUSG00000037661">
    <property type="expression patterns" value="Expressed in spermatocyte and 124 other cell types or tissues"/>
</dbReference>
<dbReference type="ExpressionAtlas" id="Q3U3F9">
    <property type="expression patterns" value="baseline and differential"/>
</dbReference>
<dbReference type="GO" id="GO:0005886">
    <property type="term" value="C:plasma membrane"/>
    <property type="evidence" value="ECO:0007669"/>
    <property type="project" value="UniProtKB-SubCell"/>
</dbReference>
<dbReference type="GO" id="GO:0043235">
    <property type="term" value="C:receptor complex"/>
    <property type="evidence" value="ECO:0000266"/>
    <property type="project" value="MGI"/>
</dbReference>
<dbReference type="GO" id="GO:0004930">
    <property type="term" value="F:G protein-coupled receptor activity"/>
    <property type="evidence" value="ECO:0007669"/>
    <property type="project" value="UniProtKB-KW"/>
</dbReference>
<dbReference type="FunFam" id="1.20.1070.10:FF:000336">
    <property type="entry name" value="Probable G-protein coupled receptor 160"/>
    <property type="match status" value="1"/>
</dbReference>
<dbReference type="Gene3D" id="1.20.1070.10">
    <property type="entry name" value="Rhodopsin 7-helix transmembrane proteins"/>
    <property type="match status" value="1"/>
</dbReference>
<dbReference type="InterPro" id="IPR017452">
    <property type="entry name" value="GPCR_Rhodpsn_7TM"/>
</dbReference>
<dbReference type="InterPro" id="IPR042353">
    <property type="entry name" value="GPR160"/>
</dbReference>
<dbReference type="PANTHER" id="PTHR15573">
    <property type="entry name" value="G-PROTEIN COUPLED RECEPTOR 160-RELATED"/>
    <property type="match status" value="1"/>
</dbReference>
<dbReference type="PANTHER" id="PTHR15573:SF0">
    <property type="entry name" value="G-PROTEIN COUPLED RECEPTOR 160-RELATED"/>
    <property type="match status" value="1"/>
</dbReference>
<dbReference type="PROSITE" id="PS50262">
    <property type="entry name" value="G_PROTEIN_RECEP_F1_2"/>
    <property type="match status" value="1"/>
</dbReference>
<proteinExistence type="evidence at transcript level"/>
<gene>
    <name type="primary">Gpr160</name>
</gene>
<keyword id="KW-1003">Cell membrane</keyword>
<keyword id="KW-0297">G-protein coupled receptor</keyword>
<keyword id="KW-0325">Glycoprotein</keyword>
<keyword id="KW-0472">Membrane</keyword>
<keyword id="KW-0675">Receptor</keyword>
<keyword id="KW-1185">Reference proteome</keyword>
<keyword id="KW-0807">Transducer</keyword>
<keyword id="KW-0812">Transmembrane</keyword>
<keyword id="KW-1133">Transmembrane helix</keyword>